<comment type="function">
    <text evidence="1">Functions in the biosynthesis of branched-chain amino acids. Catalyzes the dehydration of (2R,3R)-2,3-dihydroxy-3-methylpentanoate (2,3-dihydroxy-3-methylvalerate) into 2-oxo-3-methylpentanoate (2-oxo-3-methylvalerate) and of (2R)-2,3-dihydroxy-3-methylbutanoate (2,3-dihydroxyisovalerate) into 2-oxo-3-methylbutanoate (2-oxoisovalerate), the penultimate precursor to L-isoleucine and L-valine, respectively.</text>
</comment>
<comment type="catalytic activity">
    <reaction evidence="1">
        <text>(2R)-2,3-dihydroxy-3-methylbutanoate = 3-methyl-2-oxobutanoate + H2O</text>
        <dbReference type="Rhea" id="RHEA:24809"/>
        <dbReference type="ChEBI" id="CHEBI:11851"/>
        <dbReference type="ChEBI" id="CHEBI:15377"/>
        <dbReference type="ChEBI" id="CHEBI:49072"/>
        <dbReference type="EC" id="4.2.1.9"/>
    </reaction>
    <physiologicalReaction direction="left-to-right" evidence="1">
        <dbReference type="Rhea" id="RHEA:24810"/>
    </physiologicalReaction>
</comment>
<comment type="catalytic activity">
    <reaction evidence="1">
        <text>(2R,3R)-2,3-dihydroxy-3-methylpentanoate = (S)-3-methyl-2-oxopentanoate + H2O</text>
        <dbReference type="Rhea" id="RHEA:27694"/>
        <dbReference type="ChEBI" id="CHEBI:15377"/>
        <dbReference type="ChEBI" id="CHEBI:35146"/>
        <dbReference type="ChEBI" id="CHEBI:49258"/>
        <dbReference type="EC" id="4.2.1.9"/>
    </reaction>
    <physiologicalReaction direction="left-to-right" evidence="1">
        <dbReference type="Rhea" id="RHEA:27695"/>
    </physiologicalReaction>
</comment>
<comment type="cofactor">
    <cofactor evidence="1">
        <name>[2Fe-2S] cluster</name>
        <dbReference type="ChEBI" id="CHEBI:190135"/>
    </cofactor>
    <text evidence="1">Binds 1 [2Fe-2S] cluster per subunit. This cluster acts as a Lewis acid cofactor.</text>
</comment>
<comment type="cofactor">
    <cofactor evidence="1">
        <name>Mg(2+)</name>
        <dbReference type="ChEBI" id="CHEBI:18420"/>
    </cofactor>
</comment>
<comment type="pathway">
    <text evidence="1">Amino-acid biosynthesis; L-isoleucine biosynthesis; L-isoleucine from 2-oxobutanoate: step 3/4.</text>
</comment>
<comment type="pathway">
    <text evidence="1">Amino-acid biosynthesis; L-valine biosynthesis; L-valine from pyruvate: step 3/4.</text>
</comment>
<comment type="subunit">
    <text evidence="1">Homodimer.</text>
</comment>
<comment type="similarity">
    <text evidence="1">Belongs to the IlvD/Edd family.</text>
</comment>
<sequence>MPTTDSARAADIKQPDIKPRSRDVTDGLEKAAARGMLRAVGMGDEDFAKPQIGVASSWNEITPCNLSLDRLAKAVKEGVFAAGGYPLEFGTISVSDGISMGHEGMHFSLVSREVIADSVETVMQAERLDGSVLLAGCDKSLPGMLMAAARLDLASVFLYAGSILPGVAKLSDGSEREVTIIDAFEAVGACARGLMPREDVDAIERAICPGEGACGGMYTANTMASAAEALGMSLPGSAAPPATDRRRDGFARRSGQAVVELLRRGITARDILTKEAFENAIAVVMAFGGSTNAVLHLLAIAHEADVALSLDDFSRIGSKVPHLADVKPFGRHVMTDVDHIGGVPVMMKALLDAGLLNGDCLTVTGATVAQNLAAIAPPDPDGKVLRALSDPLHPTGGITILRGSLAPEGAVVKSAGFDSDVFEGTARVFDGERAALDALEDGTITKGDAVVIRYEGPKGGPGMREMLAITGAIKGAGLGKDVLLLTDGRFSGGTTGLCVGHIAPEAVDAGPIAFLRDGDRIRLDVANRVLDVLVDPAEFDSRRTGFTPPPPRYKTGVLAKYVKLVGSAAIGAVCG</sequence>
<dbReference type="EC" id="4.2.1.9" evidence="1"/>
<dbReference type="EMBL" id="AE016958">
    <property type="protein sequence ID" value="AAS06181.1"/>
    <property type="molecule type" value="Genomic_DNA"/>
</dbReference>
<dbReference type="RefSeq" id="WP_003874105.1">
    <property type="nucleotide sequence ID" value="NZ_CP106873.1"/>
</dbReference>
<dbReference type="SMR" id="Q73TT7"/>
<dbReference type="STRING" id="262316.MAP_3631c"/>
<dbReference type="GeneID" id="75272517"/>
<dbReference type="KEGG" id="mpa:MAP_3631c"/>
<dbReference type="eggNOG" id="COG0129">
    <property type="taxonomic scope" value="Bacteria"/>
</dbReference>
<dbReference type="HOGENOM" id="CLU_014271_4_2_11"/>
<dbReference type="UniPathway" id="UPA00047">
    <property type="reaction ID" value="UER00057"/>
</dbReference>
<dbReference type="UniPathway" id="UPA00049">
    <property type="reaction ID" value="UER00061"/>
</dbReference>
<dbReference type="Proteomes" id="UP000000580">
    <property type="component" value="Chromosome"/>
</dbReference>
<dbReference type="GO" id="GO:0051537">
    <property type="term" value="F:2 iron, 2 sulfur cluster binding"/>
    <property type="evidence" value="ECO:0007669"/>
    <property type="project" value="UniProtKB-UniRule"/>
</dbReference>
<dbReference type="GO" id="GO:0004160">
    <property type="term" value="F:dihydroxy-acid dehydratase activity"/>
    <property type="evidence" value="ECO:0007669"/>
    <property type="project" value="UniProtKB-UniRule"/>
</dbReference>
<dbReference type="GO" id="GO:0000287">
    <property type="term" value="F:magnesium ion binding"/>
    <property type="evidence" value="ECO:0007669"/>
    <property type="project" value="UniProtKB-UniRule"/>
</dbReference>
<dbReference type="GO" id="GO:0009097">
    <property type="term" value="P:isoleucine biosynthetic process"/>
    <property type="evidence" value="ECO:0007669"/>
    <property type="project" value="UniProtKB-UniRule"/>
</dbReference>
<dbReference type="GO" id="GO:0009099">
    <property type="term" value="P:L-valine biosynthetic process"/>
    <property type="evidence" value="ECO:0007669"/>
    <property type="project" value="UniProtKB-UniRule"/>
</dbReference>
<dbReference type="FunFam" id="3.50.30.80:FF:000001">
    <property type="entry name" value="Dihydroxy-acid dehydratase"/>
    <property type="match status" value="1"/>
</dbReference>
<dbReference type="Gene3D" id="3.50.30.80">
    <property type="entry name" value="IlvD/EDD C-terminal domain-like"/>
    <property type="match status" value="1"/>
</dbReference>
<dbReference type="HAMAP" id="MF_00012">
    <property type="entry name" value="IlvD"/>
    <property type="match status" value="1"/>
</dbReference>
<dbReference type="InterPro" id="IPR050165">
    <property type="entry name" value="DHAD_IlvD/Edd"/>
</dbReference>
<dbReference type="InterPro" id="IPR042096">
    <property type="entry name" value="Dihydro-acid_dehy_C"/>
</dbReference>
<dbReference type="InterPro" id="IPR004404">
    <property type="entry name" value="DihydroxyA_deHydtase"/>
</dbReference>
<dbReference type="InterPro" id="IPR020558">
    <property type="entry name" value="DiOHA_6PGluconate_deHydtase_CS"/>
</dbReference>
<dbReference type="InterPro" id="IPR056740">
    <property type="entry name" value="ILV_EDD_C"/>
</dbReference>
<dbReference type="InterPro" id="IPR000581">
    <property type="entry name" value="ILV_EDD_N"/>
</dbReference>
<dbReference type="InterPro" id="IPR037237">
    <property type="entry name" value="IlvD/EDD_N"/>
</dbReference>
<dbReference type="NCBIfam" id="TIGR00110">
    <property type="entry name" value="ilvD"/>
    <property type="match status" value="1"/>
</dbReference>
<dbReference type="NCBIfam" id="NF002068">
    <property type="entry name" value="PRK00911.1"/>
    <property type="match status" value="1"/>
</dbReference>
<dbReference type="PANTHER" id="PTHR21000">
    <property type="entry name" value="DIHYDROXY-ACID DEHYDRATASE DAD"/>
    <property type="match status" value="1"/>
</dbReference>
<dbReference type="PANTHER" id="PTHR21000:SF5">
    <property type="entry name" value="DIHYDROXY-ACID DEHYDRATASE, MITOCHONDRIAL"/>
    <property type="match status" value="1"/>
</dbReference>
<dbReference type="Pfam" id="PF24877">
    <property type="entry name" value="ILV_EDD_C"/>
    <property type="match status" value="1"/>
</dbReference>
<dbReference type="Pfam" id="PF00920">
    <property type="entry name" value="ILVD_EDD_N"/>
    <property type="match status" value="1"/>
</dbReference>
<dbReference type="SUPFAM" id="SSF143975">
    <property type="entry name" value="IlvD/EDD N-terminal domain-like"/>
    <property type="match status" value="1"/>
</dbReference>
<dbReference type="SUPFAM" id="SSF52016">
    <property type="entry name" value="LeuD/IlvD-like"/>
    <property type="match status" value="1"/>
</dbReference>
<dbReference type="PROSITE" id="PS00886">
    <property type="entry name" value="ILVD_EDD_1"/>
    <property type="match status" value="1"/>
</dbReference>
<dbReference type="PROSITE" id="PS00887">
    <property type="entry name" value="ILVD_EDD_2"/>
    <property type="match status" value="1"/>
</dbReference>
<reference key="1">
    <citation type="journal article" date="2005" name="Proc. Natl. Acad. Sci. U.S.A.">
        <title>The complete genome sequence of Mycobacterium avium subspecies paratuberculosis.</title>
        <authorList>
            <person name="Li L."/>
            <person name="Bannantine J.P."/>
            <person name="Zhang Q."/>
            <person name="Amonsin A."/>
            <person name="May B.J."/>
            <person name="Alt D."/>
            <person name="Banerji N."/>
            <person name="Kanjilal S."/>
            <person name="Kapur V."/>
        </authorList>
    </citation>
    <scope>NUCLEOTIDE SEQUENCE [LARGE SCALE GENOMIC DNA]</scope>
    <source>
        <strain>ATCC BAA-968 / K-10</strain>
    </source>
</reference>
<gene>
    <name evidence="1" type="primary">ilvD</name>
    <name type="ordered locus">MAP_3631c</name>
</gene>
<evidence type="ECO:0000255" key="1">
    <source>
        <dbReference type="HAMAP-Rule" id="MF_00012"/>
    </source>
</evidence>
<evidence type="ECO:0000256" key="2">
    <source>
        <dbReference type="SAM" id="MobiDB-lite"/>
    </source>
</evidence>
<organism>
    <name type="scientific">Mycolicibacterium paratuberculosis (strain ATCC BAA-968 / K-10)</name>
    <name type="common">Mycobacterium paratuberculosis</name>
    <dbReference type="NCBI Taxonomy" id="262316"/>
    <lineage>
        <taxon>Bacteria</taxon>
        <taxon>Bacillati</taxon>
        <taxon>Actinomycetota</taxon>
        <taxon>Actinomycetes</taxon>
        <taxon>Mycobacteriales</taxon>
        <taxon>Mycobacteriaceae</taxon>
        <taxon>Mycobacterium</taxon>
        <taxon>Mycobacterium avium complex (MAC)</taxon>
    </lineage>
</organism>
<proteinExistence type="inferred from homology"/>
<keyword id="KW-0001">2Fe-2S</keyword>
<keyword id="KW-0028">Amino-acid biosynthesis</keyword>
<keyword id="KW-0100">Branched-chain amino acid biosynthesis</keyword>
<keyword id="KW-0408">Iron</keyword>
<keyword id="KW-0411">Iron-sulfur</keyword>
<keyword id="KW-0456">Lyase</keyword>
<keyword id="KW-0460">Magnesium</keyword>
<keyword id="KW-0479">Metal-binding</keyword>
<keyword id="KW-1185">Reference proteome</keyword>
<name>ILVD_MYCPA</name>
<accession>Q73TT7</accession>
<protein>
    <recommendedName>
        <fullName evidence="1">Dihydroxy-acid dehydratase</fullName>
        <shortName evidence="1">DAD</shortName>
        <ecNumber evidence="1">4.2.1.9</ecNumber>
    </recommendedName>
</protein>
<feature type="chain" id="PRO_0000225397" description="Dihydroxy-acid dehydratase">
    <location>
        <begin position="1"/>
        <end position="575"/>
    </location>
</feature>
<feature type="region of interest" description="Disordered" evidence="2">
    <location>
        <begin position="1"/>
        <end position="25"/>
    </location>
</feature>
<feature type="compositionally biased region" description="Basic and acidic residues" evidence="2">
    <location>
        <begin position="8"/>
        <end position="25"/>
    </location>
</feature>
<feature type="active site" description="Proton acceptor" evidence="1">
    <location>
        <position position="491"/>
    </location>
</feature>
<feature type="binding site" evidence="1">
    <location>
        <position position="64"/>
    </location>
    <ligand>
        <name>[2Fe-2S] cluster</name>
        <dbReference type="ChEBI" id="CHEBI:190135"/>
    </ligand>
</feature>
<feature type="binding site" evidence="1">
    <location>
        <position position="96"/>
    </location>
    <ligand>
        <name>Mg(2+)</name>
        <dbReference type="ChEBI" id="CHEBI:18420"/>
    </ligand>
</feature>
<feature type="binding site" evidence="1">
    <location>
        <position position="137"/>
    </location>
    <ligand>
        <name>[2Fe-2S] cluster</name>
        <dbReference type="ChEBI" id="CHEBI:190135"/>
    </ligand>
</feature>
<feature type="binding site" evidence="1">
    <location>
        <position position="138"/>
    </location>
    <ligand>
        <name>Mg(2+)</name>
        <dbReference type="ChEBI" id="CHEBI:18420"/>
    </ligand>
</feature>
<feature type="binding site" description="via carbamate group" evidence="1">
    <location>
        <position position="139"/>
    </location>
    <ligand>
        <name>Mg(2+)</name>
        <dbReference type="ChEBI" id="CHEBI:18420"/>
    </ligand>
</feature>
<feature type="binding site" evidence="1">
    <location>
        <position position="214"/>
    </location>
    <ligand>
        <name>[2Fe-2S] cluster</name>
        <dbReference type="ChEBI" id="CHEBI:190135"/>
    </ligand>
</feature>
<feature type="binding site" evidence="1">
    <location>
        <position position="465"/>
    </location>
    <ligand>
        <name>Mg(2+)</name>
        <dbReference type="ChEBI" id="CHEBI:18420"/>
    </ligand>
</feature>
<feature type="modified residue" description="N6-carboxylysine" evidence="1">
    <location>
        <position position="139"/>
    </location>
</feature>